<sequence>MLVVFVATWSDLGLCKKRPKPGGWNTGGSRYPGQGSPGGNRYPPQGGGGWGQPHGGGWGQPHGGGWGQPHGGGWGQPHGGGWGQGGGTHNQWHKPSKPKTSMKHMAGAAAAGAVVGGLGGYMLGSAMSRPLIHFGNDYEDRYYRENMYRYPNQVYYRPVDQYSNQNNFVHDCVNITIKQHTVTTTTKGENFTETDVKMMERVVEQMCITQYEKESQAYYQRGSSMVLFSSPPVILLISFLIFLIVG</sequence>
<evidence type="ECO:0000250" key="1"/>
<evidence type="ECO:0000250" key="2">
    <source>
        <dbReference type="UniProtKB" id="P04156"/>
    </source>
</evidence>
<evidence type="ECO:0000250" key="3">
    <source>
        <dbReference type="UniProtKB" id="P04273"/>
    </source>
</evidence>
<evidence type="ECO:0000250" key="4">
    <source>
        <dbReference type="UniProtKB" id="P04925"/>
    </source>
</evidence>
<evidence type="ECO:0000255" key="5"/>
<evidence type="ECO:0000256" key="6">
    <source>
        <dbReference type="SAM" id="MobiDB-lite"/>
    </source>
</evidence>
<evidence type="ECO:0000305" key="7"/>
<feature type="signal peptide" evidence="1">
    <location>
        <begin position="1" status="less than"/>
        <end position="15"/>
    </location>
</feature>
<feature type="chain" id="PRO_0000025669" description="Major prion protein">
    <location>
        <begin position="16"/>
        <end position="223"/>
    </location>
</feature>
<feature type="propeptide" id="PRO_0000025670" description="Removed in mature form" evidence="1">
    <location>
        <begin position="224"/>
        <end position="246"/>
    </location>
</feature>
<feature type="repeat" description="1">
    <location>
        <begin position="44"/>
        <end position="52"/>
    </location>
</feature>
<feature type="repeat" description="2">
    <location>
        <begin position="53"/>
        <end position="60"/>
    </location>
</feature>
<feature type="repeat" description="3">
    <location>
        <begin position="61"/>
        <end position="68"/>
    </location>
</feature>
<feature type="repeat" description="4">
    <location>
        <begin position="69"/>
        <end position="76"/>
    </location>
</feature>
<feature type="repeat" description="5">
    <location>
        <begin position="77"/>
        <end position="84"/>
    </location>
</feature>
<feature type="region of interest" description="Interaction with GRB2, ERI3 and SYN1" evidence="4">
    <location>
        <begin position="16"/>
        <end position="223"/>
    </location>
</feature>
<feature type="region of interest" description="Disordered" evidence="6">
    <location>
        <begin position="18"/>
        <end position="100"/>
    </location>
</feature>
<feature type="region of interest" description="5 X 8 AA tandem repeats of P-H-G-G-G-W-G-Q">
    <location>
        <begin position="44"/>
        <end position="84"/>
    </location>
</feature>
<feature type="compositionally biased region" description="Gly residues" evidence="6">
    <location>
        <begin position="45"/>
        <end position="88"/>
    </location>
</feature>
<feature type="compositionally biased region" description="Basic residues" evidence="6">
    <location>
        <begin position="91"/>
        <end position="100"/>
    </location>
</feature>
<feature type="binding site" evidence="2">
    <location>
        <position position="54"/>
    </location>
    <ligand>
        <name>Cu(2+)</name>
        <dbReference type="ChEBI" id="CHEBI:29036"/>
        <label>1</label>
    </ligand>
</feature>
<feature type="binding site" evidence="2">
    <location>
        <position position="55"/>
    </location>
    <ligand>
        <name>Cu(2+)</name>
        <dbReference type="ChEBI" id="CHEBI:29036"/>
        <label>1</label>
    </ligand>
</feature>
<feature type="binding site" evidence="2">
    <location>
        <position position="56"/>
    </location>
    <ligand>
        <name>Cu(2+)</name>
        <dbReference type="ChEBI" id="CHEBI:29036"/>
        <label>1</label>
    </ligand>
</feature>
<feature type="binding site" evidence="2">
    <location>
        <position position="62"/>
    </location>
    <ligand>
        <name>Cu(2+)</name>
        <dbReference type="ChEBI" id="CHEBI:29036"/>
        <label>2</label>
    </ligand>
</feature>
<feature type="binding site" evidence="2">
    <location>
        <position position="63"/>
    </location>
    <ligand>
        <name>Cu(2+)</name>
        <dbReference type="ChEBI" id="CHEBI:29036"/>
        <label>2</label>
    </ligand>
</feature>
<feature type="binding site" evidence="2">
    <location>
        <position position="64"/>
    </location>
    <ligand>
        <name>Cu(2+)</name>
        <dbReference type="ChEBI" id="CHEBI:29036"/>
        <label>2</label>
    </ligand>
</feature>
<feature type="binding site" evidence="2">
    <location>
        <position position="70"/>
    </location>
    <ligand>
        <name>Cu(2+)</name>
        <dbReference type="ChEBI" id="CHEBI:29036"/>
        <label>3</label>
    </ligand>
</feature>
<feature type="binding site" evidence="2">
    <location>
        <position position="71"/>
    </location>
    <ligand>
        <name>Cu(2+)</name>
        <dbReference type="ChEBI" id="CHEBI:29036"/>
        <label>3</label>
    </ligand>
</feature>
<feature type="binding site" evidence="2">
    <location>
        <position position="72"/>
    </location>
    <ligand>
        <name>Cu(2+)</name>
        <dbReference type="ChEBI" id="CHEBI:29036"/>
        <label>3</label>
    </ligand>
</feature>
<feature type="binding site" evidence="2">
    <location>
        <position position="78"/>
    </location>
    <ligand>
        <name>Cu(2+)</name>
        <dbReference type="ChEBI" id="CHEBI:29036"/>
        <label>4</label>
    </ligand>
</feature>
<feature type="binding site" evidence="2">
    <location>
        <position position="79"/>
    </location>
    <ligand>
        <name>Cu(2+)</name>
        <dbReference type="ChEBI" id="CHEBI:29036"/>
        <label>4</label>
    </ligand>
</feature>
<feature type="binding site" evidence="2">
    <location>
        <position position="80"/>
    </location>
    <ligand>
        <name>Cu(2+)</name>
        <dbReference type="ChEBI" id="CHEBI:29036"/>
        <label>4</label>
    </ligand>
</feature>
<feature type="lipid moiety-binding region" description="GPI-anchor amidated serine" evidence="3">
    <location>
        <position position="223"/>
    </location>
</feature>
<feature type="glycosylation site" description="N-linked (GlcNAc...) asparagine" evidence="5">
    <location>
        <position position="174"/>
    </location>
</feature>
<feature type="glycosylation site" description="N-linked (GlcNAc...) asparagine" evidence="5">
    <location>
        <position position="190"/>
    </location>
</feature>
<feature type="disulfide bond" evidence="3">
    <location>
        <begin position="172"/>
        <end position="207"/>
    </location>
</feature>
<feature type="non-terminal residue">
    <location>
        <position position="1"/>
    </location>
</feature>
<dbReference type="EMBL" id="U75388">
    <property type="protein sequence ID" value="AAB50627.1"/>
    <property type="molecule type" value="Genomic_DNA"/>
</dbReference>
<dbReference type="SMR" id="Q95174"/>
<dbReference type="GlyCosmos" id="Q95174">
    <property type="glycosylation" value="2 sites, No reported glycans"/>
</dbReference>
<dbReference type="GO" id="GO:0005794">
    <property type="term" value="C:Golgi apparatus"/>
    <property type="evidence" value="ECO:0007669"/>
    <property type="project" value="UniProtKB-SubCell"/>
</dbReference>
<dbReference type="GO" id="GO:0005886">
    <property type="term" value="C:plasma membrane"/>
    <property type="evidence" value="ECO:0007669"/>
    <property type="project" value="UniProtKB-SubCell"/>
</dbReference>
<dbReference type="GO" id="GO:0098552">
    <property type="term" value="C:side of membrane"/>
    <property type="evidence" value="ECO:0007669"/>
    <property type="project" value="UniProtKB-KW"/>
</dbReference>
<dbReference type="GO" id="GO:0005507">
    <property type="term" value="F:copper ion binding"/>
    <property type="evidence" value="ECO:0000250"/>
    <property type="project" value="UniProtKB"/>
</dbReference>
<dbReference type="GO" id="GO:0051260">
    <property type="term" value="P:protein homooligomerization"/>
    <property type="evidence" value="ECO:0007669"/>
    <property type="project" value="InterPro"/>
</dbReference>
<dbReference type="FunFam" id="1.10.790.10:FF:000001">
    <property type="entry name" value="Major prion protein"/>
    <property type="match status" value="1"/>
</dbReference>
<dbReference type="Gene3D" id="1.10.790.10">
    <property type="entry name" value="Prion/Doppel protein, beta-ribbon domain"/>
    <property type="match status" value="1"/>
</dbReference>
<dbReference type="InterPro" id="IPR000817">
    <property type="entry name" value="Prion"/>
</dbReference>
<dbReference type="InterPro" id="IPR036924">
    <property type="entry name" value="Prion/Doppel_b-ribbon_dom_sf"/>
</dbReference>
<dbReference type="InterPro" id="IPR022416">
    <property type="entry name" value="Prion/Doppel_prot_b-ribbon_dom"/>
</dbReference>
<dbReference type="InterPro" id="IPR020949">
    <property type="entry name" value="Prion_copper_b_octapeptide"/>
</dbReference>
<dbReference type="InterPro" id="IPR025860">
    <property type="entry name" value="Prion_N"/>
</dbReference>
<dbReference type="PANTHER" id="PTHR15506">
    <property type="entry name" value="DOPPEL PRION"/>
    <property type="match status" value="1"/>
</dbReference>
<dbReference type="PANTHER" id="PTHR15506:SF2">
    <property type="entry name" value="MAJOR PRION PROTEIN"/>
    <property type="match status" value="1"/>
</dbReference>
<dbReference type="Pfam" id="PF00377">
    <property type="entry name" value="Prion"/>
    <property type="match status" value="1"/>
</dbReference>
<dbReference type="Pfam" id="PF11587">
    <property type="entry name" value="Prion_bPrPp"/>
    <property type="match status" value="1"/>
</dbReference>
<dbReference type="Pfam" id="PF03991">
    <property type="entry name" value="Prion_octapep"/>
    <property type="match status" value="1"/>
</dbReference>
<dbReference type="PRINTS" id="PR00341">
    <property type="entry name" value="PRION"/>
</dbReference>
<dbReference type="SMART" id="SM00157">
    <property type="entry name" value="PRP"/>
    <property type="match status" value="1"/>
</dbReference>
<dbReference type="SUPFAM" id="SSF54098">
    <property type="entry name" value="Prion-like"/>
    <property type="match status" value="1"/>
</dbReference>
<dbReference type="PROSITE" id="PS00291">
    <property type="entry name" value="PRION_1"/>
    <property type="match status" value="1"/>
</dbReference>
<dbReference type="PROSITE" id="PS00706">
    <property type="entry name" value="PRION_2"/>
    <property type="match status" value="1"/>
</dbReference>
<protein>
    <recommendedName>
        <fullName>Major prion protein</fullName>
        <shortName>PrP</shortName>
    </recommendedName>
    <alternativeName>
        <fullName>PrP27-30</fullName>
    </alternativeName>
    <alternativeName>
        <fullName>PrP33-35C</fullName>
    </alternativeName>
    <cdAntigenName>CD230</cdAntigenName>
</protein>
<reference key="1">
    <citation type="submission" date="1996-11" db="EMBL/GenBank/DDBJ databases">
        <title>Evidence for an increased substitution rate of the hominoid prion protein gene during the period of brain expansion.</title>
        <authorList>
            <person name="van der Kuyl A.C."/>
            <person name="Dekker J.T."/>
            <person name="Goudsmit J."/>
        </authorList>
    </citation>
    <scope>NUCLEOTIDE SEQUENCE [GENOMIC DNA]</scope>
</reference>
<accession>Q95174</accession>
<name>PRIO_ERYPA</name>
<organism>
    <name type="scientific">Erythrocebus patas</name>
    <name type="common">Red guenon</name>
    <name type="synonym">Cercopithecus patas</name>
    <dbReference type="NCBI Taxonomy" id="9538"/>
    <lineage>
        <taxon>Eukaryota</taxon>
        <taxon>Metazoa</taxon>
        <taxon>Chordata</taxon>
        <taxon>Craniata</taxon>
        <taxon>Vertebrata</taxon>
        <taxon>Euteleostomi</taxon>
        <taxon>Mammalia</taxon>
        <taxon>Eutheria</taxon>
        <taxon>Euarchontoglires</taxon>
        <taxon>Primates</taxon>
        <taxon>Haplorrhini</taxon>
        <taxon>Catarrhini</taxon>
        <taxon>Cercopithecidae</taxon>
        <taxon>Cercopithecinae</taxon>
        <taxon>Erythrocebus</taxon>
    </lineage>
</organism>
<comment type="function">
    <text evidence="2 4">Its primary physiological function is unclear. Has cytoprotective activity against internal or environmental stresses. May play a role in neuronal development and synaptic plasticity. May be required for neuronal myelin sheath maintenance. May play a role in iron uptake and iron homeostasis. Soluble oligomers are toxic to cultured neuroblastoma cells and induce apoptosis (in vitro). Association with GPC1 (via its heparan sulfate chains) targets PRNP to lipid rafts. Also provides Cu(2+) or Zn(2+) for the ascorbate-mediated GPC1 deaminase degradation of its heparan sulfate side chains (By similarity).</text>
</comment>
<comment type="subunit">
    <text evidence="2 4">Monomer and homodimer. Has a tendency to aggregate into amyloid fibrils containing a cross-beta spine, formed by a steric zipper of superposed beta-strands. Soluble oligomers may represent an intermediate stage on the path to fibril formation. Copper binding may promote oligomerization. Interacts with GRB2, APP, ERI3/PRNPIP and SYN1. Mislocalized cytosolically exposed PrP interacts with MGRN1; this interaction alters MGRN1 subcellular location and causes lysosomal enlargement. Interacts with KIAA1191.</text>
</comment>
<comment type="subcellular location">
    <subcellularLocation>
        <location evidence="2">Cell membrane</location>
        <topology evidence="2">Lipid-anchor</topology>
        <topology evidence="2">GPI-anchor</topology>
    </subcellularLocation>
    <subcellularLocation>
        <location evidence="4">Golgi apparatus</location>
    </subcellularLocation>
    <text evidence="2">Targeted to lipid rafts via association with the heparan sulfate chains of GPC1. Colocates, in the presence of Cu(2+), to vesicles in para- and perinuclear regions, where both proteins undergo internalization. Heparin displaces PRNP from lipid rafts and promotes endocytosis.</text>
</comment>
<comment type="domain">
    <text evidence="2">The normal, monomeric form has a mainly alpha-helical structure. The disease-associated, protease-resistant form forms amyloid fibrils containing a cross-beta spine, formed by a steric zipper of superposed beta-strands. Disease mutations may favor intermolecular contacts via short beta strands, and may thereby trigger oligomerization.</text>
</comment>
<comment type="domain">
    <text evidence="2">Contains an N-terminal region composed of octamer repeats. At low copper concentrations, the sidechains of His residues from three or four repeats contribute to the binding of a single copper ion. Alternatively, a copper ion can be bound by interaction with the sidechain and backbone amide nitrogen of a single His residue. The observed copper binding stoichiometry suggests that two repeat regions cooperate to stabilize the binding of a single copper ion. At higher copper concentrations, each octamer can bind one copper ion by interactions with the His sidechain and Gly backbone atoms. A mixture of binding types may occur, especially in the case of octamer repeat expansion. Copper binding may stabilize the conformation of this region and may promote oligomerization.</text>
</comment>
<comment type="disease">
    <text evidence="7">PrP is found in high quantity in the brain of humans and animals infected with the degenerative neurological diseases kuru, Creutzfeldt-Jakob disease (CJD), Gerstmann-Straussler syndrome (GSS), scrapie, bovine spongiform encephalopathy (BSE), transmissible mink encephalopathy (TME), etc.</text>
</comment>
<comment type="similarity">
    <text evidence="7">Belongs to the prion family.</text>
</comment>
<proteinExistence type="inferred from homology"/>
<gene>
    <name type="primary">PRNP</name>
    <name type="synonym">PRP</name>
</gene>
<keyword id="KW-0034">Amyloid</keyword>
<keyword id="KW-1003">Cell membrane</keyword>
<keyword id="KW-0186">Copper</keyword>
<keyword id="KW-1015">Disulfide bond</keyword>
<keyword id="KW-0325">Glycoprotein</keyword>
<keyword id="KW-0333">Golgi apparatus</keyword>
<keyword id="KW-0336">GPI-anchor</keyword>
<keyword id="KW-0449">Lipoprotein</keyword>
<keyword id="KW-0472">Membrane</keyword>
<keyword id="KW-0479">Metal-binding</keyword>
<keyword id="KW-0640">Prion</keyword>
<keyword id="KW-0677">Repeat</keyword>
<keyword id="KW-0732">Signal</keyword>
<keyword id="KW-0862">Zinc</keyword>